<proteinExistence type="inferred from homology"/>
<feature type="chain" id="PRO_0000373030" description="Polymerase basic protein 2">
    <location>
        <begin position="1"/>
        <end position="759"/>
    </location>
</feature>
<feature type="short sequence motif" description="Nuclear localization signal" evidence="1">
    <location>
        <begin position="736"/>
        <end position="739"/>
    </location>
</feature>
<feature type="site" description="Mammalian adaptation" evidence="1">
    <location>
        <position position="627"/>
    </location>
</feature>
<comment type="function">
    <text evidence="1">Plays an essential role in transcription initiation and cap-stealing mechanism, in which cellular capped pre-mRNAs are used to generate primers for viral transcription. Recognizes and binds the 7-methylguanosine-containing cap of the target pre-RNA which is subsequently cleaved after 10-13 nucleotides by the viral protein PA. Plays a role in the initiation of the viral genome replication and modulates the activity of the ribonucleoprotein (RNP) complex. In addition, participates in the inhibition of type I interferon induction through interaction with and inhibition of the host mitochondrial antiviral signaling protein MAVS.</text>
</comment>
<comment type="subunit">
    <text evidence="1">Influenza RNA polymerase is composed of three subunits: PB1, PB2 and PA. Interacts (via N-terminus) with PB1 (via C-terminus). Interacts with nucleoprotein NP (via N-terminus). Interacts (via N-terminus) with host MAVS (via N-terminus); this interaction inhibits host innate immune response.</text>
</comment>
<comment type="subcellular location">
    <subcellularLocation>
        <location evidence="1">Virion</location>
    </subcellularLocation>
    <subcellularLocation>
        <location evidence="1">Host nucleus</location>
    </subcellularLocation>
    <subcellularLocation>
        <location evidence="1">Host mitochondrion</location>
    </subcellularLocation>
</comment>
<comment type="similarity">
    <text evidence="1">Belongs to the influenza viruses PB2 family.</text>
</comment>
<organism>
    <name type="scientific">Influenza A virus (strain A/USA:Phila/1935 H1N1)</name>
    <dbReference type="NCBI Taxonomy" id="425570"/>
    <lineage>
        <taxon>Viruses</taxon>
        <taxon>Riboviria</taxon>
        <taxon>Orthornavirae</taxon>
        <taxon>Negarnaviricota</taxon>
        <taxon>Polyploviricotina</taxon>
        <taxon>Insthoviricetes</taxon>
        <taxon>Articulavirales</taxon>
        <taxon>Orthomyxoviridae</taxon>
        <taxon>Alphainfluenzavirus</taxon>
        <taxon>Alphainfluenzavirus influenzae</taxon>
        <taxon>Influenza A virus</taxon>
    </lineage>
</organism>
<evidence type="ECO:0000255" key="1">
    <source>
        <dbReference type="HAMAP-Rule" id="MF_04062"/>
    </source>
</evidence>
<reference key="1">
    <citation type="submission" date="2007-03" db="EMBL/GenBank/DDBJ databases">
        <title>The NIAID influenza genome sequencing project.</title>
        <authorList>
            <person name="Ghedin E."/>
            <person name="Spiro D."/>
            <person name="Miller N."/>
            <person name="Zaborsky J."/>
            <person name="Feldblyum T."/>
            <person name="Subbu V."/>
            <person name="Shumway M."/>
            <person name="Sparenborg J."/>
            <person name="Groveman L."/>
            <person name="Halpin R."/>
            <person name="Sitz J."/>
            <person name="Koo H."/>
            <person name="Salzberg S.L."/>
            <person name="Webster R.G."/>
            <person name="Hoffmann E."/>
            <person name="Krauss S."/>
            <person name="Naeve C."/>
            <person name="Bao Y."/>
            <person name="Bolotov P."/>
            <person name="Dernovoy D."/>
            <person name="Kiryutin B."/>
            <person name="Lipman D.J."/>
            <person name="Tatusova T."/>
        </authorList>
    </citation>
    <scope>NUCLEOTIDE SEQUENCE [GENOMIC RNA]</scope>
</reference>
<reference key="2">
    <citation type="submission" date="2007-03" db="EMBL/GenBank/DDBJ databases">
        <authorList>
            <consortium name="The NIAID Influenza Genome Sequencing Consortium"/>
        </authorList>
    </citation>
    <scope>NUCLEOTIDE SEQUENCE [GENOMIC RNA]</scope>
</reference>
<keyword id="KW-1157">Cap snatching</keyword>
<keyword id="KW-1262">Eukaryotic host gene expression shutoff by virus</keyword>
<keyword id="KW-1191">Eukaryotic host transcription shutoff by virus</keyword>
<keyword id="KW-1190">Host gene expression shutoff by virus</keyword>
<keyword id="KW-1045">Host mitochondrion</keyword>
<keyword id="KW-1048">Host nucleus</keyword>
<keyword id="KW-0945">Host-virus interaction</keyword>
<keyword id="KW-1090">Inhibition of host innate immune response by virus</keyword>
<keyword id="KW-1097">Inhibition of host MAVS by virus</keyword>
<keyword id="KW-1113">Inhibition of host RLR pathway by virus</keyword>
<keyword id="KW-1104">Inhibition of host RNA polymerase II by virus</keyword>
<keyword id="KW-0506">mRNA capping</keyword>
<keyword id="KW-0507">mRNA processing</keyword>
<keyword id="KW-0899">Viral immunoevasion</keyword>
<keyword id="KW-1195">Viral transcription</keyword>
<keyword id="KW-0946">Virion</keyword>
<organismHost>
    <name type="scientific">Aves</name>
    <dbReference type="NCBI Taxonomy" id="8782"/>
</organismHost>
<organismHost>
    <name type="scientific">Homo sapiens</name>
    <name type="common">Human</name>
    <dbReference type="NCBI Taxonomy" id="9606"/>
</organismHost>
<organismHost>
    <name type="scientific">Sus scrofa</name>
    <name type="common">Pig</name>
    <dbReference type="NCBI Taxonomy" id="9823"/>
</organismHost>
<name>PB2_I35A3</name>
<dbReference type="EMBL" id="CY020476">
    <property type="protein sequence ID" value="ABO38394.1"/>
    <property type="molecule type" value="Viral_cRNA"/>
</dbReference>
<dbReference type="SMR" id="A4GCM9"/>
<dbReference type="PRO" id="PR:A4GCM9"/>
<dbReference type="Proteomes" id="UP000000829">
    <property type="component" value="Genome"/>
</dbReference>
<dbReference type="GO" id="GO:0033650">
    <property type="term" value="C:host cell mitochondrion"/>
    <property type="evidence" value="ECO:0007669"/>
    <property type="project" value="UniProtKB-SubCell"/>
</dbReference>
<dbReference type="GO" id="GO:0042025">
    <property type="term" value="C:host cell nucleus"/>
    <property type="evidence" value="ECO:0007669"/>
    <property type="project" value="UniProtKB-SubCell"/>
</dbReference>
<dbReference type="GO" id="GO:0044423">
    <property type="term" value="C:virion component"/>
    <property type="evidence" value="ECO:0007669"/>
    <property type="project" value="UniProtKB-UniRule"/>
</dbReference>
<dbReference type="GO" id="GO:0003723">
    <property type="term" value="F:RNA binding"/>
    <property type="evidence" value="ECO:0007669"/>
    <property type="project" value="UniProtKB-UniRule"/>
</dbReference>
<dbReference type="GO" id="GO:0003968">
    <property type="term" value="F:RNA-directed RNA polymerase activity"/>
    <property type="evidence" value="ECO:0007669"/>
    <property type="project" value="UniProtKB-UniRule"/>
</dbReference>
<dbReference type="GO" id="GO:0006370">
    <property type="term" value="P:7-methylguanosine mRNA capping"/>
    <property type="evidence" value="ECO:0007669"/>
    <property type="project" value="UniProtKB-UniRule"/>
</dbReference>
<dbReference type="GO" id="GO:0075526">
    <property type="term" value="P:cap snatching"/>
    <property type="evidence" value="ECO:0007669"/>
    <property type="project" value="UniProtKB-UniRule"/>
</dbReference>
<dbReference type="GO" id="GO:0006351">
    <property type="term" value="P:DNA-templated transcription"/>
    <property type="evidence" value="ECO:0007669"/>
    <property type="project" value="UniProtKB-UniRule"/>
</dbReference>
<dbReference type="GO" id="GO:0039545">
    <property type="term" value="P:symbiont-mediated suppression of host cytoplasmic pattern recognition receptor signaling pathway via inhibition of MAVS activity"/>
    <property type="evidence" value="ECO:0007669"/>
    <property type="project" value="UniProtKB-UniRule"/>
</dbReference>
<dbReference type="GO" id="GO:0039657">
    <property type="term" value="P:symbiont-mediated suppression of host gene expression"/>
    <property type="evidence" value="ECO:0007669"/>
    <property type="project" value="UniProtKB-KW"/>
</dbReference>
<dbReference type="GO" id="GO:0039523">
    <property type="term" value="P:symbiont-mediated suppression of host mRNA transcription via inhibition of RNA polymerase II activity"/>
    <property type="evidence" value="ECO:0007669"/>
    <property type="project" value="UniProtKB-UniRule"/>
</dbReference>
<dbReference type="GO" id="GO:0039694">
    <property type="term" value="P:viral RNA genome replication"/>
    <property type="evidence" value="ECO:0007669"/>
    <property type="project" value="InterPro"/>
</dbReference>
<dbReference type="FunFam" id="3.30.30.90:FF:000001">
    <property type="entry name" value="Polymerase basic protein 2"/>
    <property type="match status" value="1"/>
</dbReference>
<dbReference type="Gene3D" id="3.30.30.90">
    <property type="entry name" value="Polymerase Basic Protein 2, C-terminal domain"/>
    <property type="match status" value="1"/>
</dbReference>
<dbReference type="HAMAP" id="MF_04062">
    <property type="entry name" value="INV_PB2"/>
    <property type="match status" value="1"/>
</dbReference>
<dbReference type="InterPro" id="IPR049110">
    <property type="entry name" value="Flu_PB2_2nd"/>
</dbReference>
<dbReference type="InterPro" id="IPR049114">
    <property type="entry name" value="Flu_PB2_6th"/>
</dbReference>
<dbReference type="InterPro" id="IPR049115">
    <property type="entry name" value="Flu_PB2_C"/>
</dbReference>
<dbReference type="InterPro" id="IPR048298">
    <property type="entry name" value="Flu_PB2_CAP-bd"/>
</dbReference>
<dbReference type="InterPro" id="IPR049111">
    <property type="entry name" value="Flu_PB2_middle"/>
</dbReference>
<dbReference type="InterPro" id="IPR049106">
    <property type="entry name" value="Flu_PB2_N"/>
</dbReference>
<dbReference type="InterPro" id="IPR001591">
    <property type="entry name" value="INV_PB2"/>
</dbReference>
<dbReference type="InterPro" id="IPR049113">
    <property type="entry name" value="PB2_helical"/>
</dbReference>
<dbReference type="InterPro" id="IPR037258">
    <property type="entry name" value="PDB2_C"/>
</dbReference>
<dbReference type="Pfam" id="PF20947">
    <property type="entry name" value="Flu_PB2_1st"/>
    <property type="match status" value="1"/>
</dbReference>
<dbReference type="Pfam" id="PF20948">
    <property type="entry name" value="Flu_PB2_2nd"/>
    <property type="match status" value="1"/>
</dbReference>
<dbReference type="Pfam" id="PF20949">
    <property type="entry name" value="Flu_PB2_3rd"/>
    <property type="match status" value="1"/>
</dbReference>
<dbReference type="Pfam" id="PF20950">
    <property type="entry name" value="Flu_PB2_4th"/>
    <property type="match status" value="1"/>
</dbReference>
<dbReference type="Pfam" id="PF00604">
    <property type="entry name" value="Flu_PB2_5th"/>
    <property type="match status" value="1"/>
</dbReference>
<dbReference type="Pfam" id="PF20951">
    <property type="entry name" value="Flu_PB2_6th"/>
    <property type="match status" value="1"/>
</dbReference>
<dbReference type="Pfam" id="PF20952">
    <property type="entry name" value="Flu_PB2_7th"/>
    <property type="match status" value="1"/>
</dbReference>
<dbReference type="SUPFAM" id="SSF160453">
    <property type="entry name" value="PB2 C-terminal domain-like"/>
    <property type="match status" value="1"/>
</dbReference>
<protein>
    <recommendedName>
        <fullName evidence="1">Polymerase basic protein 2</fullName>
    </recommendedName>
    <alternativeName>
        <fullName evidence="1">RNA-directed RNA polymerase subunit P3</fullName>
    </alternativeName>
</protein>
<sequence length="759" mass="85921">MERIKELRNLMSQSRTREILTKTTVDHMAIIKKYTSGRQEKNPALRMKWMMAMKYPITADKRITEMIPERNEQGQTLWSKMNDAGSDRVMVSPLAVTWWNRNGPMTSTVHYPKIYKTYFEKVERLKHGTFGPVHFRNQVKIRRRVDINPGHADLSAKEAQDVIMEVVFPNEVGARILTSESQLTITKEKKEELQDCKISPLMVAYMLERELVRKTRFLPVAGGTSSVYIEVLHLTQGTCWEQMYTPGGEVRNDDVDQSLIIAARNIVRRAAVSADPLASLLEMCHGTQIGGIRMVDILRQNPTEEQAVDICKAAMGLRISSSFSFGGFTFKRTSGSSVKREEEVLTGNLQTLKIIVHEGYEEFTMVGRRATAILRKATRRLIQLIVSGRDEQSIAEAIIVAMVFSQEDCMIKAVRGDLNFVNRANQRLNPMHQLLRHFQKDAKVLFQNWGIEPIDNVMGMIGILPDMTPSIEMSMRGVRVSKMGVDEYSSTERAVVSIDRFLRVRDQRGNVLLSPEEVSETQGTEKLTITYSSSMMWEINGPESVLVNTYQWIIRNWETVKIQWSQNPTMLYNKMEFEPFQSLVPKAIRGQYSGFVRTLFQQMRDVLGTFDTAQIIKLLPFAAAPPKLSRMQFSSLTVNVRGSGMRILVRGNSPVFNYNKATKRLTVLGKDAGTLTEDPDEGTAGVESAVLRGFLILGKEDRRYGPALSINELSNLAKGEKANVLIGQGDVVLVMKRKRDSSILTDSQTATKRIRMAIN</sequence>
<gene>
    <name evidence="1" type="primary">PB2</name>
</gene>
<accession>A4GCM9</accession>